<evidence type="ECO:0000255" key="1">
    <source>
        <dbReference type="HAMAP-Rule" id="MF_00662"/>
    </source>
</evidence>
<name>PSD_ACIET</name>
<reference key="1">
    <citation type="submission" date="2009-01" db="EMBL/GenBank/DDBJ databases">
        <title>Complete sequence of Diaphorobacter sp. TPSY.</title>
        <authorList>
            <consortium name="US DOE Joint Genome Institute"/>
            <person name="Lucas S."/>
            <person name="Copeland A."/>
            <person name="Lapidus A."/>
            <person name="Glavina del Rio T."/>
            <person name="Tice H."/>
            <person name="Bruce D."/>
            <person name="Goodwin L."/>
            <person name="Pitluck S."/>
            <person name="Chertkov O."/>
            <person name="Brettin T."/>
            <person name="Detter J.C."/>
            <person name="Han C."/>
            <person name="Larimer F."/>
            <person name="Land M."/>
            <person name="Hauser L."/>
            <person name="Kyrpides N."/>
            <person name="Mikhailova N."/>
            <person name="Coates J.D."/>
        </authorList>
    </citation>
    <scope>NUCLEOTIDE SEQUENCE [LARGE SCALE GENOMIC DNA]</scope>
    <source>
        <strain>TPSY</strain>
    </source>
</reference>
<keyword id="KW-1003">Cell membrane</keyword>
<keyword id="KW-0210">Decarboxylase</keyword>
<keyword id="KW-0444">Lipid biosynthesis</keyword>
<keyword id="KW-0443">Lipid metabolism</keyword>
<keyword id="KW-0456">Lyase</keyword>
<keyword id="KW-0472">Membrane</keyword>
<keyword id="KW-0594">Phospholipid biosynthesis</keyword>
<keyword id="KW-1208">Phospholipid metabolism</keyword>
<keyword id="KW-0670">Pyruvate</keyword>
<keyword id="KW-1185">Reference proteome</keyword>
<keyword id="KW-0865">Zymogen</keyword>
<sequence>MSDRIAVLPQYLLPKQALTSFAGRMASARAGQLTTAVIRRFVARYGVDMSEAANPDIASYATFNDFFTRALRPGLRPLADAAVVCPVDGAVSQIGPIEQDQIFQAKGHLYSTAALLGGDAEMAAQFQDGSFATIYLSPRDYHRIHMPCDGRLVRMDHVPGALFSVNPTTARGVPGLFARNERVVCLFETPLGPMALVLVGATIVGSMATVWHGQVNPPRTGQPRRWDYGDREVVLRQGDEMGRFLLGSTVVLLFPRGAVQFMPGWEAARPVRLGEAMAHRCGI</sequence>
<protein>
    <recommendedName>
        <fullName evidence="1">Phosphatidylserine decarboxylase proenzyme</fullName>
        <ecNumber evidence="1">4.1.1.65</ecNumber>
    </recommendedName>
    <component>
        <recommendedName>
            <fullName evidence="1">Phosphatidylserine decarboxylase alpha chain</fullName>
        </recommendedName>
    </component>
    <component>
        <recommendedName>
            <fullName evidence="1">Phosphatidylserine decarboxylase beta chain</fullName>
        </recommendedName>
    </component>
</protein>
<dbReference type="EC" id="4.1.1.65" evidence="1"/>
<dbReference type="EMBL" id="CP001392">
    <property type="protein sequence ID" value="ACM33492.1"/>
    <property type="molecule type" value="Genomic_DNA"/>
</dbReference>
<dbReference type="SMR" id="B9MAC0"/>
<dbReference type="KEGG" id="dia:Dtpsy_2036"/>
<dbReference type="eggNOG" id="COG0688">
    <property type="taxonomic scope" value="Bacteria"/>
</dbReference>
<dbReference type="HOGENOM" id="CLU_029061_4_1_4"/>
<dbReference type="UniPathway" id="UPA00558">
    <property type="reaction ID" value="UER00616"/>
</dbReference>
<dbReference type="Proteomes" id="UP000000450">
    <property type="component" value="Chromosome"/>
</dbReference>
<dbReference type="GO" id="GO:0005886">
    <property type="term" value="C:plasma membrane"/>
    <property type="evidence" value="ECO:0007669"/>
    <property type="project" value="UniProtKB-SubCell"/>
</dbReference>
<dbReference type="GO" id="GO:0004609">
    <property type="term" value="F:phosphatidylserine decarboxylase activity"/>
    <property type="evidence" value="ECO:0007669"/>
    <property type="project" value="UniProtKB-UniRule"/>
</dbReference>
<dbReference type="GO" id="GO:0006646">
    <property type="term" value="P:phosphatidylethanolamine biosynthetic process"/>
    <property type="evidence" value="ECO:0007669"/>
    <property type="project" value="UniProtKB-UniRule"/>
</dbReference>
<dbReference type="HAMAP" id="MF_00662">
    <property type="entry name" value="PS_decarb_PSD_B_type1"/>
    <property type="match status" value="1"/>
</dbReference>
<dbReference type="InterPro" id="IPR003817">
    <property type="entry name" value="PS_Dcarbxylase"/>
</dbReference>
<dbReference type="InterPro" id="IPR033177">
    <property type="entry name" value="PSD-B"/>
</dbReference>
<dbReference type="InterPro" id="IPR033178">
    <property type="entry name" value="PSD_type1_pro"/>
</dbReference>
<dbReference type="NCBIfam" id="TIGR00163">
    <property type="entry name" value="PS_decarb"/>
    <property type="match status" value="1"/>
</dbReference>
<dbReference type="PANTHER" id="PTHR10067">
    <property type="entry name" value="PHOSPHATIDYLSERINE DECARBOXYLASE"/>
    <property type="match status" value="1"/>
</dbReference>
<dbReference type="PANTHER" id="PTHR10067:SF6">
    <property type="entry name" value="PHOSPHATIDYLSERINE DECARBOXYLASE PROENZYME, MITOCHONDRIAL"/>
    <property type="match status" value="1"/>
</dbReference>
<dbReference type="Pfam" id="PF02666">
    <property type="entry name" value="PS_Dcarbxylase"/>
    <property type="match status" value="1"/>
</dbReference>
<feature type="chain" id="PRO_1000147597" description="Phosphatidylserine decarboxylase beta chain" evidence="1">
    <location>
        <begin position="1"/>
        <end position="247"/>
    </location>
</feature>
<feature type="chain" id="PRO_1000147598" description="Phosphatidylserine decarboxylase alpha chain" evidence="1">
    <location>
        <begin position="248"/>
        <end position="283"/>
    </location>
</feature>
<feature type="active site" description="Charge relay system; for autoendoproteolytic cleavage activity" evidence="1">
    <location>
        <position position="88"/>
    </location>
</feature>
<feature type="active site" description="Charge relay system; for autoendoproteolytic cleavage activity" evidence="1">
    <location>
        <position position="145"/>
    </location>
</feature>
<feature type="active site" description="Charge relay system; for autoendoproteolytic cleavage activity" evidence="1">
    <location>
        <position position="248"/>
    </location>
</feature>
<feature type="active site" description="Schiff-base intermediate with substrate; via pyruvic acid; for decarboxylase activity" evidence="1">
    <location>
        <position position="248"/>
    </location>
</feature>
<feature type="site" description="Cleavage (non-hydrolytic); by autocatalysis" evidence="1">
    <location>
        <begin position="247"/>
        <end position="248"/>
    </location>
</feature>
<feature type="modified residue" description="Pyruvic acid (Ser); by autocatalysis" evidence="1">
    <location>
        <position position="248"/>
    </location>
</feature>
<comment type="function">
    <text evidence="1">Catalyzes the formation of phosphatidylethanolamine (PtdEtn) from phosphatidylserine (PtdSer).</text>
</comment>
<comment type="catalytic activity">
    <reaction evidence="1">
        <text>a 1,2-diacyl-sn-glycero-3-phospho-L-serine + H(+) = a 1,2-diacyl-sn-glycero-3-phosphoethanolamine + CO2</text>
        <dbReference type="Rhea" id="RHEA:20828"/>
        <dbReference type="ChEBI" id="CHEBI:15378"/>
        <dbReference type="ChEBI" id="CHEBI:16526"/>
        <dbReference type="ChEBI" id="CHEBI:57262"/>
        <dbReference type="ChEBI" id="CHEBI:64612"/>
        <dbReference type="EC" id="4.1.1.65"/>
    </reaction>
</comment>
<comment type="cofactor">
    <cofactor evidence="1">
        <name>pyruvate</name>
        <dbReference type="ChEBI" id="CHEBI:15361"/>
    </cofactor>
    <text evidence="1">Binds 1 pyruvoyl group covalently per subunit.</text>
</comment>
<comment type="pathway">
    <text evidence="1">Phospholipid metabolism; phosphatidylethanolamine biosynthesis; phosphatidylethanolamine from CDP-diacylglycerol: step 2/2.</text>
</comment>
<comment type="subunit">
    <text evidence="1">Heterodimer of a large membrane-associated beta subunit and a small pyruvoyl-containing alpha subunit.</text>
</comment>
<comment type="subcellular location">
    <subcellularLocation>
        <location evidence="1">Cell membrane</location>
        <topology evidence="1">Peripheral membrane protein</topology>
    </subcellularLocation>
</comment>
<comment type="PTM">
    <text evidence="1">Is synthesized initially as an inactive proenzyme. Formation of the active enzyme involves a self-maturation process in which the active site pyruvoyl group is generated from an internal serine residue via an autocatalytic post-translational modification. Two non-identical subunits are generated from the proenzyme in this reaction, and the pyruvate is formed at the N-terminus of the alpha chain, which is derived from the carboxyl end of the proenzyme. The autoendoproteolytic cleavage occurs by a canonical serine protease mechanism, in which the side chain hydroxyl group of the serine supplies its oxygen atom to form the C-terminus of the beta chain, while the remainder of the serine residue undergoes an oxidative deamination to produce ammonia and the pyruvoyl prosthetic group on the alpha chain. During this reaction, the Ser that is part of the protease active site of the proenzyme becomes the pyruvoyl prosthetic group, which constitutes an essential element of the active site of the mature decarboxylase.</text>
</comment>
<comment type="similarity">
    <text evidence="1">Belongs to the phosphatidylserine decarboxylase family. PSD-B subfamily. Prokaryotic type I sub-subfamily.</text>
</comment>
<gene>
    <name evidence="1" type="primary">psd</name>
    <name type="ordered locus">Dtpsy_2036</name>
</gene>
<accession>B9MAC0</accession>
<proteinExistence type="inferred from homology"/>
<organism>
    <name type="scientific">Acidovorax ebreus (strain TPSY)</name>
    <name type="common">Diaphorobacter sp. (strain TPSY)</name>
    <dbReference type="NCBI Taxonomy" id="535289"/>
    <lineage>
        <taxon>Bacteria</taxon>
        <taxon>Pseudomonadati</taxon>
        <taxon>Pseudomonadota</taxon>
        <taxon>Betaproteobacteria</taxon>
        <taxon>Burkholderiales</taxon>
        <taxon>Comamonadaceae</taxon>
        <taxon>Diaphorobacter</taxon>
    </lineage>
</organism>